<reference key="1">
    <citation type="journal article" date="2005" name="Plant Cell">
        <title>Distinct and cooperative functions of phytochromes a, B, and C in the control of deetiolation and flowering in rice.</title>
        <authorList>
            <person name="Takano M."/>
            <person name="Inagaki N."/>
            <person name="Xie X."/>
            <person name="Yuzurihara N."/>
            <person name="Hihara F."/>
            <person name="Ishizuka T."/>
            <person name="Yano M."/>
            <person name="Nishimura M."/>
            <person name="Miyao A."/>
            <person name="Hirochika H."/>
            <person name="Shinomura T."/>
        </authorList>
    </citation>
    <scope>NUCLEOTIDE SEQUENCE [GENOMIC DNA / MRNA]</scope>
    <source>
        <strain>cv. Nipponbare</strain>
        <strain>cv. Nohrin 8</strain>
        <tissue>Etiolated seedling</tissue>
    </source>
</reference>
<reference key="2">
    <citation type="journal article" date="2005" name="Genome Res.">
        <title>Sequence, annotation, and analysis of synteny between rice chromosome 3 and diverged grass species.</title>
        <authorList>
            <consortium name="The rice chromosome 3 sequencing consortium"/>
            <person name="Buell C.R."/>
            <person name="Yuan Q."/>
            <person name="Ouyang S."/>
            <person name="Liu J."/>
            <person name="Zhu W."/>
            <person name="Wang A."/>
            <person name="Maiti R."/>
            <person name="Haas B."/>
            <person name="Wortman J."/>
            <person name="Pertea M."/>
            <person name="Jones K.M."/>
            <person name="Kim M."/>
            <person name="Overton L."/>
            <person name="Tsitrin T."/>
            <person name="Fadrosh D."/>
            <person name="Bera J."/>
            <person name="Weaver B."/>
            <person name="Jin S."/>
            <person name="Johri S."/>
            <person name="Reardon M."/>
            <person name="Webb K."/>
            <person name="Hill J."/>
            <person name="Moffat K."/>
            <person name="Tallon L."/>
            <person name="Van Aken S."/>
            <person name="Lewis M."/>
            <person name="Utterback T."/>
            <person name="Feldblyum T."/>
            <person name="Zismann V."/>
            <person name="Iobst S."/>
            <person name="Hsiao J."/>
            <person name="de Vazeille A.R."/>
            <person name="Salzberg S.L."/>
            <person name="White O."/>
            <person name="Fraser C.M."/>
            <person name="Yu Y."/>
            <person name="Kim H."/>
            <person name="Rambo T."/>
            <person name="Currie J."/>
            <person name="Collura K."/>
            <person name="Kernodle-Thompson S."/>
            <person name="Wei F."/>
            <person name="Kudrna K."/>
            <person name="Ammiraju J.S.S."/>
            <person name="Luo M."/>
            <person name="Goicoechea J.L."/>
            <person name="Wing R.A."/>
            <person name="Henry D."/>
            <person name="Oates R."/>
            <person name="Palmer M."/>
            <person name="Pries G."/>
            <person name="Saski C."/>
            <person name="Simmons J."/>
            <person name="Soderlund C."/>
            <person name="Nelson W."/>
            <person name="de la Bastide M."/>
            <person name="Spiegel L."/>
            <person name="Nascimento L."/>
            <person name="Huang E."/>
            <person name="Preston R."/>
            <person name="Zutavern T."/>
            <person name="Palmer L."/>
            <person name="O'Shaughnessy A."/>
            <person name="Dike S."/>
            <person name="McCombie W.R."/>
            <person name="Minx P."/>
            <person name="Cordum H."/>
            <person name="Wilson R."/>
            <person name="Jin W."/>
            <person name="Lee H.R."/>
            <person name="Jiang J."/>
            <person name="Jackson S."/>
        </authorList>
    </citation>
    <scope>NUCLEOTIDE SEQUENCE [LARGE SCALE GENOMIC DNA]</scope>
    <source>
        <strain>cv. Nipponbare</strain>
    </source>
</reference>
<reference key="3">
    <citation type="journal article" date="2005" name="Nature">
        <title>The map-based sequence of the rice genome.</title>
        <authorList>
            <consortium name="International rice genome sequencing project (IRGSP)"/>
        </authorList>
    </citation>
    <scope>NUCLEOTIDE SEQUENCE [LARGE SCALE GENOMIC DNA]</scope>
    <source>
        <strain>cv. Nipponbare</strain>
    </source>
</reference>
<reference key="4">
    <citation type="journal article" date="2008" name="Nucleic Acids Res.">
        <title>The rice annotation project database (RAP-DB): 2008 update.</title>
        <authorList>
            <consortium name="The rice annotation project (RAP)"/>
        </authorList>
    </citation>
    <scope>GENOME REANNOTATION</scope>
    <source>
        <strain>cv. Nipponbare</strain>
    </source>
</reference>
<reference key="5">
    <citation type="journal article" date="2013" name="Rice">
        <title>Improvement of the Oryza sativa Nipponbare reference genome using next generation sequence and optical map data.</title>
        <authorList>
            <person name="Kawahara Y."/>
            <person name="de la Bastide M."/>
            <person name="Hamilton J.P."/>
            <person name="Kanamori H."/>
            <person name="McCombie W.R."/>
            <person name="Ouyang S."/>
            <person name="Schwartz D.C."/>
            <person name="Tanaka T."/>
            <person name="Wu J."/>
            <person name="Zhou S."/>
            <person name="Childs K.L."/>
            <person name="Davidson R.M."/>
            <person name="Lin H."/>
            <person name="Quesada-Ocampo L."/>
            <person name="Vaillancourt B."/>
            <person name="Sakai H."/>
            <person name="Lee S.S."/>
            <person name="Kim J."/>
            <person name="Numa H."/>
            <person name="Itoh T."/>
            <person name="Buell C.R."/>
            <person name="Matsumoto T."/>
        </authorList>
    </citation>
    <scope>GENOME REANNOTATION</scope>
    <source>
        <strain>cv. Nipponbare</strain>
    </source>
</reference>
<organism>
    <name type="scientific">Oryza sativa subsp. japonica</name>
    <name type="common">Rice</name>
    <dbReference type="NCBI Taxonomy" id="39947"/>
    <lineage>
        <taxon>Eukaryota</taxon>
        <taxon>Viridiplantae</taxon>
        <taxon>Streptophyta</taxon>
        <taxon>Embryophyta</taxon>
        <taxon>Tracheophyta</taxon>
        <taxon>Spermatophyta</taxon>
        <taxon>Magnoliopsida</taxon>
        <taxon>Liliopsida</taxon>
        <taxon>Poales</taxon>
        <taxon>Poaceae</taxon>
        <taxon>BOP clade</taxon>
        <taxon>Oryzoideae</taxon>
        <taxon>Oryzeae</taxon>
        <taxon>Oryzinae</taxon>
        <taxon>Oryza</taxon>
        <taxon>Oryza sativa</taxon>
    </lineage>
</organism>
<name>PHYB_ORYSJ</name>
<gene>
    <name type="primary">PHYB</name>
    <name type="synonym">PHYB1</name>
    <name type="ordered locus">Os03g0309200</name>
    <name type="ordered locus">LOC_Os03g19590</name>
</gene>
<proteinExistence type="evidence at transcript level"/>
<protein>
    <recommendedName>
        <fullName>Phytochrome B</fullName>
    </recommendedName>
</protein>
<dbReference type="EMBL" id="AB109892">
    <property type="protein sequence ID" value="BAC76432.1"/>
    <property type="molecule type" value="mRNA"/>
</dbReference>
<dbReference type="EMBL" id="AB183525">
    <property type="protein sequence ID" value="BAD86669.1"/>
    <property type="molecule type" value="Genomic_DNA"/>
</dbReference>
<dbReference type="EMBL" id="DP000009">
    <property type="protein sequence ID" value="ABF95558.1"/>
    <property type="molecule type" value="Genomic_DNA"/>
</dbReference>
<dbReference type="EMBL" id="AP008209">
    <property type="protein sequence ID" value="BAF11824.2"/>
    <property type="status" value="ALT_SEQ"/>
    <property type="molecule type" value="Genomic_DNA"/>
</dbReference>
<dbReference type="EMBL" id="AP014959">
    <property type="status" value="NOT_ANNOTATED_CDS"/>
    <property type="molecule type" value="Genomic_DNA"/>
</dbReference>
<dbReference type="RefSeq" id="XP_015631282.1">
    <property type="nucleotide sequence ID" value="XM_015775796.1"/>
</dbReference>
<dbReference type="BMRB" id="Q10MG9"/>
<dbReference type="SMR" id="Q10MG9"/>
<dbReference type="FunCoup" id="Q10MG9">
    <property type="interactions" value="509"/>
</dbReference>
<dbReference type="IntAct" id="Q10MG9">
    <property type="interactions" value="1"/>
</dbReference>
<dbReference type="STRING" id="39947.Q10MG9"/>
<dbReference type="PaxDb" id="39947-Q10MG9"/>
<dbReference type="EnsemblPlants" id="Os03t0309200-02">
    <property type="protein sequence ID" value="Os03t0309200-02"/>
    <property type="gene ID" value="Os03g0309200"/>
</dbReference>
<dbReference type="Gramene" id="Os03t0309200-02">
    <property type="protein sequence ID" value="Os03t0309200-02"/>
    <property type="gene ID" value="Os03g0309200"/>
</dbReference>
<dbReference type="KEGG" id="dosa:Os03g0309200"/>
<dbReference type="eggNOG" id="ENOG502QRNS">
    <property type="taxonomic scope" value="Eukaryota"/>
</dbReference>
<dbReference type="HOGENOM" id="CLU_010418_0_0_1"/>
<dbReference type="InParanoid" id="Q10MG9"/>
<dbReference type="OrthoDB" id="2015534at2759"/>
<dbReference type="PlantReactome" id="R-OSA-8933811">
    <property type="pathway name" value="Circadian rhythm"/>
</dbReference>
<dbReference type="PlantReactome" id="R-OSA-8934036">
    <property type="pathway name" value="Long day regulated expression of florigens"/>
</dbReference>
<dbReference type="Proteomes" id="UP000000763">
    <property type="component" value="Chromosome 3"/>
</dbReference>
<dbReference type="Proteomes" id="UP000059680">
    <property type="component" value="Chromosome 3"/>
</dbReference>
<dbReference type="ExpressionAtlas" id="Q10MG9">
    <property type="expression patterns" value="baseline and differential"/>
</dbReference>
<dbReference type="GO" id="GO:0005634">
    <property type="term" value="C:nucleus"/>
    <property type="evidence" value="ECO:0000318"/>
    <property type="project" value="GO_Central"/>
</dbReference>
<dbReference type="GO" id="GO:0000155">
    <property type="term" value="F:phosphorelay sensor kinase activity"/>
    <property type="evidence" value="ECO:0007669"/>
    <property type="project" value="InterPro"/>
</dbReference>
<dbReference type="GO" id="GO:0009881">
    <property type="term" value="F:photoreceptor activity"/>
    <property type="evidence" value="ECO:0007669"/>
    <property type="project" value="UniProtKB-KW"/>
</dbReference>
<dbReference type="GO" id="GO:0042803">
    <property type="term" value="F:protein homodimerization activity"/>
    <property type="evidence" value="ECO:0007669"/>
    <property type="project" value="InterPro"/>
</dbReference>
<dbReference type="GO" id="GO:0009584">
    <property type="term" value="P:detection of visible light"/>
    <property type="evidence" value="ECO:0007669"/>
    <property type="project" value="InterPro"/>
</dbReference>
<dbReference type="GO" id="GO:0009585">
    <property type="term" value="P:red, far-red light phototransduction"/>
    <property type="evidence" value="ECO:0007669"/>
    <property type="project" value="InterPro"/>
</dbReference>
<dbReference type="GO" id="GO:0006355">
    <property type="term" value="P:regulation of DNA-templated transcription"/>
    <property type="evidence" value="ECO:0007669"/>
    <property type="project" value="InterPro"/>
</dbReference>
<dbReference type="CDD" id="cd16932">
    <property type="entry name" value="HATPase_Phy-like"/>
    <property type="match status" value="1"/>
</dbReference>
<dbReference type="CDD" id="cd00082">
    <property type="entry name" value="HisKA"/>
    <property type="match status" value="1"/>
</dbReference>
<dbReference type="CDD" id="cd00130">
    <property type="entry name" value="PAS"/>
    <property type="match status" value="2"/>
</dbReference>
<dbReference type="FunFam" id="1.10.287.130:FF:000029">
    <property type="entry name" value="Phytochrome"/>
    <property type="match status" value="1"/>
</dbReference>
<dbReference type="FunFam" id="3.30.450.20:FF:000034">
    <property type="entry name" value="Phytochrome"/>
    <property type="match status" value="1"/>
</dbReference>
<dbReference type="FunFam" id="3.30.450.20:FF:000039">
    <property type="entry name" value="Phytochrome"/>
    <property type="match status" value="1"/>
</dbReference>
<dbReference type="FunFam" id="3.30.450.270:FF:000001">
    <property type="entry name" value="Phytochrome"/>
    <property type="match status" value="1"/>
</dbReference>
<dbReference type="FunFam" id="3.30.565.10:FF:000044">
    <property type="entry name" value="Phytochrome"/>
    <property type="match status" value="1"/>
</dbReference>
<dbReference type="Gene3D" id="1.10.287.130">
    <property type="match status" value="1"/>
</dbReference>
<dbReference type="Gene3D" id="3.30.450.270">
    <property type="match status" value="1"/>
</dbReference>
<dbReference type="Gene3D" id="3.30.450.40">
    <property type="match status" value="1"/>
</dbReference>
<dbReference type="Gene3D" id="3.30.565.10">
    <property type="entry name" value="Histidine kinase-like ATPase, C-terminal domain"/>
    <property type="match status" value="1"/>
</dbReference>
<dbReference type="Gene3D" id="3.30.450.20">
    <property type="entry name" value="PAS domain"/>
    <property type="match status" value="3"/>
</dbReference>
<dbReference type="InterPro" id="IPR003018">
    <property type="entry name" value="GAF"/>
</dbReference>
<dbReference type="InterPro" id="IPR029016">
    <property type="entry name" value="GAF-like_dom_sf"/>
</dbReference>
<dbReference type="InterPro" id="IPR036890">
    <property type="entry name" value="HATPase_C_sf"/>
</dbReference>
<dbReference type="InterPro" id="IPR005467">
    <property type="entry name" value="His_kinase_dom"/>
</dbReference>
<dbReference type="InterPro" id="IPR003661">
    <property type="entry name" value="HisK_dim/P_dom"/>
</dbReference>
<dbReference type="InterPro" id="IPR036097">
    <property type="entry name" value="HisK_dim/P_sf"/>
</dbReference>
<dbReference type="InterPro" id="IPR000014">
    <property type="entry name" value="PAS"/>
</dbReference>
<dbReference type="InterPro" id="IPR035965">
    <property type="entry name" value="PAS-like_dom_sf"/>
</dbReference>
<dbReference type="InterPro" id="IPR013654">
    <property type="entry name" value="PAS_2"/>
</dbReference>
<dbReference type="InterPro" id="IPR013767">
    <property type="entry name" value="PAS_fold"/>
</dbReference>
<dbReference type="InterPro" id="IPR044767">
    <property type="entry name" value="Phy_HATPase-like"/>
</dbReference>
<dbReference type="InterPro" id="IPR016132">
    <property type="entry name" value="Phyto_chromo_attachment"/>
</dbReference>
<dbReference type="InterPro" id="IPR013516">
    <property type="entry name" value="Phyto_chromo_BS"/>
</dbReference>
<dbReference type="InterPro" id="IPR001294">
    <property type="entry name" value="Phytochrome"/>
</dbReference>
<dbReference type="InterPro" id="IPR012129">
    <property type="entry name" value="Phytochrome_A-E"/>
</dbReference>
<dbReference type="InterPro" id="IPR013515">
    <property type="entry name" value="Phytochrome_cen-reg"/>
</dbReference>
<dbReference type="InterPro" id="IPR043150">
    <property type="entry name" value="Phytochrome_PHY_sf"/>
</dbReference>
<dbReference type="NCBIfam" id="TIGR00229">
    <property type="entry name" value="sensory_box"/>
    <property type="match status" value="1"/>
</dbReference>
<dbReference type="PANTHER" id="PTHR47876">
    <property type="entry name" value="OS08G0260000 PROTEIN"/>
    <property type="match status" value="1"/>
</dbReference>
<dbReference type="PANTHER" id="PTHR47876:SF3">
    <property type="entry name" value="PHYTOCHROME 1"/>
    <property type="match status" value="1"/>
</dbReference>
<dbReference type="Pfam" id="PF01590">
    <property type="entry name" value="GAF"/>
    <property type="match status" value="1"/>
</dbReference>
<dbReference type="Pfam" id="PF02518">
    <property type="entry name" value="HATPase_c"/>
    <property type="match status" value="1"/>
</dbReference>
<dbReference type="Pfam" id="PF00512">
    <property type="entry name" value="HisKA"/>
    <property type="match status" value="1"/>
</dbReference>
<dbReference type="Pfam" id="PF00989">
    <property type="entry name" value="PAS"/>
    <property type="match status" value="2"/>
</dbReference>
<dbReference type="Pfam" id="PF08446">
    <property type="entry name" value="PAS_2"/>
    <property type="match status" value="1"/>
</dbReference>
<dbReference type="Pfam" id="PF00360">
    <property type="entry name" value="PHY"/>
    <property type="match status" value="1"/>
</dbReference>
<dbReference type="PIRSF" id="PIRSF000084">
    <property type="entry name" value="Phytochrome"/>
    <property type="match status" value="1"/>
</dbReference>
<dbReference type="PRINTS" id="PR01033">
    <property type="entry name" value="PHYTOCHROME"/>
</dbReference>
<dbReference type="SMART" id="SM00065">
    <property type="entry name" value="GAF"/>
    <property type="match status" value="1"/>
</dbReference>
<dbReference type="SMART" id="SM00387">
    <property type="entry name" value="HATPase_c"/>
    <property type="match status" value="1"/>
</dbReference>
<dbReference type="SMART" id="SM00388">
    <property type="entry name" value="HisKA"/>
    <property type="match status" value="1"/>
</dbReference>
<dbReference type="SMART" id="SM00091">
    <property type="entry name" value="PAS"/>
    <property type="match status" value="2"/>
</dbReference>
<dbReference type="SUPFAM" id="SSF55874">
    <property type="entry name" value="ATPase domain of HSP90 chaperone/DNA topoisomerase II/histidine kinase"/>
    <property type="match status" value="1"/>
</dbReference>
<dbReference type="SUPFAM" id="SSF55781">
    <property type="entry name" value="GAF domain-like"/>
    <property type="match status" value="2"/>
</dbReference>
<dbReference type="SUPFAM" id="SSF47384">
    <property type="entry name" value="Homodimeric domain of signal transducing histidine kinase"/>
    <property type="match status" value="1"/>
</dbReference>
<dbReference type="SUPFAM" id="SSF55785">
    <property type="entry name" value="PYP-like sensor domain (PAS domain)"/>
    <property type="match status" value="3"/>
</dbReference>
<dbReference type="PROSITE" id="PS50109">
    <property type="entry name" value="HIS_KIN"/>
    <property type="match status" value="1"/>
</dbReference>
<dbReference type="PROSITE" id="PS50112">
    <property type="entry name" value="PAS"/>
    <property type="match status" value="2"/>
</dbReference>
<dbReference type="PROSITE" id="PS00245">
    <property type="entry name" value="PHYTOCHROME_1"/>
    <property type="match status" value="1"/>
</dbReference>
<dbReference type="PROSITE" id="PS50046">
    <property type="entry name" value="PHYTOCHROME_2"/>
    <property type="match status" value="1"/>
</dbReference>
<sequence>MASGSRATPTRSPSSARPAAPRHQHHHSQSSGGSTSRAGGGGGGGGGGGGGAAAAESVSKAVAQYTLDARLHAVFEQSGASGRSFDYTQSLRASPTPSSEQQIAAYLSRIQRGGHIQPFGCTLAVADDSSFRLLAYSENTADLLDLSPHHSVPSLDSSAVPPPVSLGADARLLFAPSSAVLLERAFAAREISLLNPLWIHSRVSSKPFYAILHRIDVGVVIDLEPARTEDPALSIAGAVQSQKLAVRAISRLQALPGGDVKLLCDTVVEYVRELTGYDRVMVYRFHEDEHGEVVAESRRNNLEPYIGLHYPATDIPQASRFLFRQNRVRMIADCHAAPVRVIQDPALTQPLCLVGSTLRSPHGCHAQYMANMGSIASLVMAVIISSGGDDDHNISRGSIPSAMKLWGLVVCHHTSPRCIPFPLRYACEFLMQAFGLQLNMELQLAHQLSEKHILRTQTLLCDMLLRDSPTGIVTQSPSIMDLVKCDGAALYYHGKYYPLGVTPTEVQIKDIIEWLTMCHGDSTGLSTDSLADAGYPGAAALGDAVSGMAVAYITPSDYLFWFRSHTAKEIKWGGAKHHPEDKDDGQRMHPRSSFKAFLEVVKSRSLPWENAEMDAIHSLQLILRDSFRDSAEGTSNSKAIVNGQVQLGELELRGIDELSSVAREMVRLIETATVPIFAVDTDGCINGWNAKVAELTGLSVEEAMGKSLVNDLIFKESEETVNKLLSRALRGDEDKNVEIKLKTFGPEQSKGPIFVIVNACSSRDYTKNIVGVCFVGQDVTGQKVVMDKFINIQGDYKAIVHNPNPLIPPIFASDENTCCSEWNTAMEKLTGWSRGEVVGKLLVGEVFGNCCRLKGPDALTKFMIVLHNAIGGQDCEKFPFSFFDKNGKYVQALLTANTRSRMDGEAIGAFCFLQIASPELQQAFEIQRHHEKKCYARMKELAYIYQEIKNPLNGIRFTNSLLEMTDLKDDQRQFLETSTACEKQMSKIVKDASLQSIEDGSLVLEKGEFSLGSVMNAVVSQVMIQLRERDLQLIRDIPDEIKEASAYGDQYRIQQVLCDFLLSMVRFAPAENGWVEIQVRPNIKQNSDGTDTMLFLFRFACPGEGLPPEIVQDMFSNSRWTTQEGIGLSICRKILKLMGGEVQYIRESERSFFHIVLELPQPQQAASRGTS</sequence>
<accession>Q10MG9</accession>
<accession>P25764</accession>
<accession>Q84LN8</accession>
<keyword id="KW-0157">Chromophore</keyword>
<keyword id="KW-0600">Photoreceptor protein</keyword>
<keyword id="KW-0675">Receptor</keyword>
<keyword id="KW-1185">Reference proteome</keyword>
<keyword id="KW-0677">Repeat</keyword>
<keyword id="KW-0716">Sensory transduction</keyword>
<keyword id="KW-0804">Transcription</keyword>
<keyword id="KW-0805">Transcription regulation</keyword>
<feature type="chain" id="PRO_0000171978" description="Phytochrome B">
    <location>
        <begin position="1"/>
        <end position="1171"/>
    </location>
</feature>
<feature type="domain" description="GAF">
    <location>
        <begin position="259"/>
        <end position="442"/>
    </location>
</feature>
<feature type="domain" description="PAS 1" evidence="3">
    <location>
        <begin position="661"/>
        <end position="732"/>
    </location>
</feature>
<feature type="domain" description="PAS 2" evidence="3">
    <location>
        <begin position="795"/>
        <end position="866"/>
    </location>
</feature>
<feature type="domain" description="Histidine kinase" evidence="2">
    <location>
        <begin position="943"/>
        <end position="1161"/>
    </location>
</feature>
<feature type="region of interest" description="Disordered" evidence="4">
    <location>
        <begin position="1"/>
        <end position="53"/>
    </location>
</feature>
<feature type="compositionally biased region" description="Low complexity" evidence="4">
    <location>
        <begin position="1"/>
        <end position="19"/>
    </location>
</feature>
<feature type="compositionally biased region" description="Gly residues" evidence="4">
    <location>
        <begin position="38"/>
        <end position="52"/>
    </location>
</feature>
<feature type="binding site" description="covalent" evidence="1">
    <location>
        <position position="364"/>
    </location>
    <ligand>
        <name>phytochromobilin</name>
        <dbReference type="ChEBI" id="CHEBI:189064"/>
    </ligand>
</feature>
<evidence type="ECO:0000250" key="1"/>
<evidence type="ECO:0000255" key="2">
    <source>
        <dbReference type="PROSITE-ProRule" id="PRU00107"/>
    </source>
</evidence>
<evidence type="ECO:0000255" key="3">
    <source>
        <dbReference type="PROSITE-ProRule" id="PRU00140"/>
    </source>
</evidence>
<evidence type="ECO:0000256" key="4">
    <source>
        <dbReference type="SAM" id="MobiDB-lite"/>
    </source>
</evidence>
<evidence type="ECO:0000305" key="5"/>
<comment type="function">
    <text>Regulatory photoreceptor which exists in two forms that are reversibly interconvertible by light: the Pr form that absorbs maximally in the red region of the spectrum and the Pfr form that absorbs maximally in the far-red region. Photoconversion of Pr to Pfr induces an array of morphogenic responses, whereas reconversion of Pfr to Pr cancels the induction of those responses. Pfr controls the expression of a number of nuclear genes including those encoding the small subunit of ribulose-bisphosphate carboxylase, chlorophyll A/B binding protein, protochlorophyllide reductase, rRNA, etc. It also controls the expression of its own gene(s) in a negative feedback fashion.</text>
</comment>
<comment type="subunit">
    <text>Homodimer.</text>
</comment>
<comment type="PTM">
    <text evidence="1">Contains one covalently linked phytochromobilin chromophore.</text>
</comment>
<comment type="similarity">
    <text evidence="5">Belongs to the phytochrome family.</text>
</comment>
<comment type="sequence caution" evidence="5">
    <conflict type="erroneous gene model prediction">
        <sequence resource="EMBL-CDS" id="BAF11824"/>
    </conflict>
</comment>